<organism>
    <name type="scientific">Homo sapiens</name>
    <name type="common">Human</name>
    <dbReference type="NCBI Taxonomy" id="9606"/>
    <lineage>
        <taxon>Eukaryota</taxon>
        <taxon>Metazoa</taxon>
        <taxon>Chordata</taxon>
        <taxon>Craniata</taxon>
        <taxon>Vertebrata</taxon>
        <taxon>Euteleostomi</taxon>
        <taxon>Mammalia</taxon>
        <taxon>Eutheria</taxon>
        <taxon>Euarchontoglires</taxon>
        <taxon>Primates</taxon>
        <taxon>Haplorrhini</taxon>
        <taxon>Catarrhini</taxon>
        <taxon>Hominidae</taxon>
        <taxon>Homo</taxon>
    </lineage>
</organism>
<dbReference type="EMBL" id="M94633">
    <property type="status" value="NOT_ANNOTATED_CDS"/>
    <property type="molecule type" value="Genomic_DNA"/>
</dbReference>
<dbReference type="EMBL" id="AK292664">
    <property type="protein sequence ID" value="BAF85353.1"/>
    <property type="molecule type" value="mRNA"/>
</dbReference>
<dbReference type="EMBL" id="CH471064">
    <property type="protein sequence ID" value="EAW68117.1"/>
    <property type="molecule type" value="Genomic_DNA"/>
</dbReference>
<dbReference type="EMBL" id="BC022397">
    <property type="protein sequence ID" value="AAH22397.1"/>
    <property type="molecule type" value="mRNA"/>
</dbReference>
<dbReference type="CCDS" id="CCDS7903.1"/>
<dbReference type="RefSeq" id="NP_000527.2">
    <property type="nucleotide sequence ID" value="NM_000536.4"/>
</dbReference>
<dbReference type="RefSeq" id="NP_001230714.1">
    <property type="nucleotide sequence ID" value="NM_001243785.2"/>
</dbReference>
<dbReference type="RefSeq" id="NP_001230715.1">
    <property type="nucleotide sequence ID" value="NM_001243786.2"/>
</dbReference>
<dbReference type="RefSeq" id="XP_047283341.1">
    <property type="nucleotide sequence ID" value="XM_047427385.1"/>
</dbReference>
<dbReference type="RefSeq" id="XP_047283342.1">
    <property type="nucleotide sequence ID" value="XM_047427386.1"/>
</dbReference>
<dbReference type="RefSeq" id="XP_054225566.1">
    <property type="nucleotide sequence ID" value="XM_054369591.1"/>
</dbReference>
<dbReference type="PDB" id="8T4R">
    <property type="method" value="X-ray"/>
    <property type="resolution" value="1.20 A"/>
    <property type="chains" value="A=414-487"/>
</dbReference>
<dbReference type="PDBsum" id="8T4R"/>
<dbReference type="SMR" id="P55895"/>
<dbReference type="BioGRID" id="111833">
    <property type="interactions" value="18"/>
</dbReference>
<dbReference type="CORUM" id="P55895"/>
<dbReference type="FunCoup" id="P55895">
    <property type="interactions" value="221"/>
</dbReference>
<dbReference type="IntAct" id="P55895">
    <property type="interactions" value="1"/>
</dbReference>
<dbReference type="STRING" id="9606.ENSP00000478672"/>
<dbReference type="iPTMnet" id="P55895"/>
<dbReference type="PhosphoSitePlus" id="P55895"/>
<dbReference type="BioMuta" id="RAG2"/>
<dbReference type="DMDM" id="2498830"/>
<dbReference type="MassIVE" id="P55895"/>
<dbReference type="PaxDb" id="9606-ENSP00000478672"/>
<dbReference type="PeptideAtlas" id="P55895"/>
<dbReference type="ProteomicsDB" id="56877"/>
<dbReference type="Antibodypedia" id="26023">
    <property type="antibodies" value="269 antibodies from 33 providers"/>
</dbReference>
<dbReference type="DNASU" id="5897"/>
<dbReference type="Ensembl" id="ENST00000311485.8">
    <property type="protein sequence ID" value="ENSP00000308620.4"/>
    <property type="gene ID" value="ENSG00000175097.9"/>
</dbReference>
<dbReference type="Ensembl" id="ENST00000527033.6">
    <property type="protein sequence ID" value="ENSP00000436895.2"/>
    <property type="gene ID" value="ENSG00000175097.9"/>
</dbReference>
<dbReference type="Ensembl" id="ENST00000529083.2">
    <property type="protein sequence ID" value="ENSP00000436327.2"/>
    <property type="gene ID" value="ENSG00000175097.9"/>
</dbReference>
<dbReference type="Ensembl" id="ENST00000532616.2">
    <property type="protein sequence ID" value="ENSP00000432174.2"/>
    <property type="gene ID" value="ENSG00000175097.9"/>
</dbReference>
<dbReference type="GeneID" id="5897"/>
<dbReference type="KEGG" id="hsa:5897"/>
<dbReference type="MANE-Select" id="ENST00000311485.8">
    <property type="protein sequence ID" value="ENSP00000308620.4"/>
    <property type="RefSeq nucleotide sequence ID" value="NM_000536.4"/>
    <property type="RefSeq protein sequence ID" value="NP_000527.2"/>
</dbReference>
<dbReference type="UCSC" id="uc001mwv.5">
    <property type="organism name" value="human"/>
</dbReference>
<dbReference type="AGR" id="HGNC:9832"/>
<dbReference type="CTD" id="5897"/>
<dbReference type="DisGeNET" id="5897"/>
<dbReference type="GeneCards" id="RAG2"/>
<dbReference type="HGNC" id="HGNC:9832">
    <property type="gene designation" value="RAG2"/>
</dbReference>
<dbReference type="HPA" id="ENSG00000175097">
    <property type="expression patterns" value="Tissue enriched (lymphoid)"/>
</dbReference>
<dbReference type="MalaCards" id="RAG2"/>
<dbReference type="MIM" id="179616">
    <property type="type" value="gene"/>
</dbReference>
<dbReference type="MIM" id="233650">
    <property type="type" value="phenotype"/>
</dbReference>
<dbReference type="MIM" id="601457">
    <property type="type" value="phenotype"/>
</dbReference>
<dbReference type="MIM" id="603554">
    <property type="type" value="phenotype"/>
</dbReference>
<dbReference type="neXtProt" id="NX_P55895"/>
<dbReference type="OpenTargets" id="ENSG00000175097"/>
<dbReference type="Orphanet" id="157949">
    <property type="disease" value="Combined immunodeficiency with granulomatosis"/>
</dbReference>
<dbReference type="Orphanet" id="39041">
    <property type="disease" value="Omenn syndrome"/>
</dbReference>
<dbReference type="Orphanet" id="331206">
    <property type="disease" value="Severe combined immunodeficiency due to complete RAG1/2 deficiency"/>
</dbReference>
<dbReference type="PharmGKB" id="PA34186"/>
<dbReference type="VEuPathDB" id="HostDB:ENSG00000175097"/>
<dbReference type="eggNOG" id="ENOG502QVKU">
    <property type="taxonomic scope" value="Eukaryota"/>
</dbReference>
<dbReference type="GeneTree" id="ENSGT00390000012559"/>
<dbReference type="HOGENOM" id="CLU_516740_0_0_1"/>
<dbReference type="InParanoid" id="P55895"/>
<dbReference type="OMA" id="MIFCSRG"/>
<dbReference type="OrthoDB" id="8512570at2759"/>
<dbReference type="PAN-GO" id="P55895">
    <property type="GO annotations" value="3 GO annotations based on evolutionary models"/>
</dbReference>
<dbReference type="PhylomeDB" id="P55895"/>
<dbReference type="TreeFam" id="TF331236"/>
<dbReference type="PathwayCommons" id="P55895"/>
<dbReference type="Reactome" id="R-HSA-1266695">
    <property type="pathway name" value="Interleukin-7 signaling"/>
</dbReference>
<dbReference type="Reactome" id="R-HSA-5687128">
    <property type="pathway name" value="MAPK6/MAPK4 signaling"/>
</dbReference>
<dbReference type="SignaLink" id="P55895"/>
<dbReference type="SIGNOR" id="P55895"/>
<dbReference type="BioGRID-ORCS" id="5897">
    <property type="hits" value="14 hits in 1155 CRISPR screens"/>
</dbReference>
<dbReference type="ChiTaRS" id="RAG2">
    <property type="organism name" value="human"/>
</dbReference>
<dbReference type="GenomeRNAi" id="5897"/>
<dbReference type="Pharos" id="P55895">
    <property type="development level" value="Tbio"/>
</dbReference>
<dbReference type="PRO" id="PR:P55895"/>
<dbReference type="Proteomes" id="UP000005640">
    <property type="component" value="Chromosome 11"/>
</dbReference>
<dbReference type="RNAct" id="P55895">
    <property type="molecule type" value="protein"/>
</dbReference>
<dbReference type="Bgee" id="ENSG00000175097">
    <property type="expression patterns" value="Expressed in thymus and 97 other cell types or tissues"/>
</dbReference>
<dbReference type="ExpressionAtlas" id="P55895">
    <property type="expression patterns" value="baseline and differential"/>
</dbReference>
<dbReference type="GO" id="GO:0097519">
    <property type="term" value="C:DNA recombinase complex"/>
    <property type="evidence" value="ECO:0000318"/>
    <property type="project" value="GO_Central"/>
</dbReference>
<dbReference type="GO" id="GO:0005654">
    <property type="term" value="C:nucleoplasm"/>
    <property type="evidence" value="ECO:0000304"/>
    <property type="project" value="Reactome"/>
</dbReference>
<dbReference type="GO" id="GO:0003682">
    <property type="term" value="F:chromatin binding"/>
    <property type="evidence" value="ECO:0000250"/>
    <property type="project" value="UniProtKB"/>
</dbReference>
<dbReference type="GO" id="GO:0140002">
    <property type="term" value="F:histone H3K4me3 reader activity"/>
    <property type="evidence" value="ECO:0000250"/>
    <property type="project" value="UniProtKB"/>
</dbReference>
<dbReference type="GO" id="GO:0035091">
    <property type="term" value="F:phosphatidylinositol binding"/>
    <property type="evidence" value="ECO:0000250"/>
    <property type="project" value="UniProtKB"/>
</dbReference>
<dbReference type="GO" id="GO:0005547">
    <property type="term" value="F:phosphatidylinositol-3,4,5-trisphosphate binding"/>
    <property type="evidence" value="ECO:0000250"/>
    <property type="project" value="UniProtKB"/>
</dbReference>
<dbReference type="GO" id="GO:0043325">
    <property type="term" value="F:phosphatidylinositol-3,4-bisphosphate binding"/>
    <property type="evidence" value="ECO:0000250"/>
    <property type="project" value="UniProtKB"/>
</dbReference>
<dbReference type="GO" id="GO:0080025">
    <property type="term" value="F:phosphatidylinositol-3,5-bisphosphate binding"/>
    <property type="evidence" value="ECO:0000250"/>
    <property type="project" value="UniProtKB"/>
</dbReference>
<dbReference type="GO" id="GO:0005546">
    <property type="term" value="F:phosphatidylinositol-4,5-bisphosphate binding"/>
    <property type="evidence" value="ECO:0000250"/>
    <property type="project" value="UniProtKB"/>
</dbReference>
<dbReference type="GO" id="GO:0043565">
    <property type="term" value="F:sequence-specific DNA binding"/>
    <property type="evidence" value="ECO:0000318"/>
    <property type="project" value="GO_Central"/>
</dbReference>
<dbReference type="GO" id="GO:0008270">
    <property type="term" value="F:zinc ion binding"/>
    <property type="evidence" value="ECO:0000250"/>
    <property type="project" value="UniProtKB"/>
</dbReference>
<dbReference type="GO" id="GO:0030183">
    <property type="term" value="P:B cell differentiation"/>
    <property type="evidence" value="ECO:0000250"/>
    <property type="project" value="UniProtKB"/>
</dbReference>
<dbReference type="GO" id="GO:0002358">
    <property type="term" value="P:B cell homeostatic proliferation"/>
    <property type="evidence" value="ECO:0007669"/>
    <property type="project" value="Ensembl"/>
</dbReference>
<dbReference type="GO" id="GO:0002326">
    <property type="term" value="P:B cell lineage commitment"/>
    <property type="evidence" value="ECO:0007669"/>
    <property type="project" value="Ensembl"/>
</dbReference>
<dbReference type="GO" id="GO:0042742">
    <property type="term" value="P:defense response to bacterium"/>
    <property type="evidence" value="ECO:0007669"/>
    <property type="project" value="Ensembl"/>
</dbReference>
<dbReference type="GO" id="GO:1904155">
    <property type="term" value="P:DN2 thymocyte differentiation"/>
    <property type="evidence" value="ECO:0007669"/>
    <property type="project" value="Ensembl"/>
</dbReference>
<dbReference type="GO" id="GO:0002313">
    <property type="term" value="P:mature B cell differentiation involved in immune response"/>
    <property type="evidence" value="ECO:0007669"/>
    <property type="project" value="Ensembl"/>
</dbReference>
<dbReference type="GO" id="GO:0033085">
    <property type="term" value="P:negative regulation of T cell differentiation in thymus"/>
    <property type="evidence" value="ECO:0007669"/>
    <property type="project" value="Ensembl"/>
</dbReference>
<dbReference type="GO" id="GO:0035265">
    <property type="term" value="P:organ growth"/>
    <property type="evidence" value="ECO:0007669"/>
    <property type="project" value="Ensembl"/>
</dbReference>
<dbReference type="GO" id="GO:0046622">
    <property type="term" value="P:positive regulation of organ growth"/>
    <property type="evidence" value="ECO:0007669"/>
    <property type="project" value="Ensembl"/>
</dbReference>
<dbReference type="GO" id="GO:0002331">
    <property type="term" value="P:pre-B cell allelic exclusion"/>
    <property type="evidence" value="ECO:0000250"/>
    <property type="project" value="UniProtKB"/>
</dbReference>
<dbReference type="GO" id="GO:0033077">
    <property type="term" value="P:T cell differentiation in thymus"/>
    <property type="evidence" value="ECO:0000250"/>
    <property type="project" value="UniProtKB"/>
</dbReference>
<dbReference type="GO" id="GO:0002360">
    <property type="term" value="P:T cell lineage commitment"/>
    <property type="evidence" value="ECO:0007669"/>
    <property type="project" value="Ensembl"/>
</dbReference>
<dbReference type="GO" id="GO:0033151">
    <property type="term" value="P:V(D)J recombination"/>
    <property type="evidence" value="ECO:0000250"/>
    <property type="project" value="UniProtKB"/>
</dbReference>
<dbReference type="CDD" id="cd15569">
    <property type="entry name" value="PHD_RAG2"/>
    <property type="match status" value="1"/>
</dbReference>
<dbReference type="FunFam" id="2.120.10.80:FF:000047">
    <property type="entry name" value="V(D)J recombination-activating protein 2"/>
    <property type="match status" value="1"/>
</dbReference>
<dbReference type="FunFam" id="3.30.160.290:FF:000001">
    <property type="entry name" value="V(D)J recombination-activating protein 2"/>
    <property type="match status" value="1"/>
</dbReference>
<dbReference type="Gene3D" id="2.120.10.80">
    <property type="entry name" value="Kelch-type beta propeller"/>
    <property type="match status" value="1"/>
</dbReference>
<dbReference type="Gene3D" id="3.30.160.290">
    <property type="entry name" value="Rag2 PHD finger"/>
    <property type="match status" value="1"/>
</dbReference>
<dbReference type="InterPro" id="IPR011043">
    <property type="entry name" value="Gal_Oxase/kelch_b-propeller"/>
</dbReference>
<dbReference type="InterPro" id="IPR015915">
    <property type="entry name" value="Kelch-typ_b-propeller"/>
</dbReference>
<dbReference type="InterPro" id="IPR004321">
    <property type="entry name" value="RAG2"/>
</dbReference>
<dbReference type="InterPro" id="IPR025162">
    <property type="entry name" value="RAG2_PHD"/>
</dbReference>
<dbReference type="InterPro" id="IPR011011">
    <property type="entry name" value="Znf_FYVE_PHD"/>
</dbReference>
<dbReference type="PANTHER" id="PTHR10960">
    <property type="entry name" value="V D J RECOMBINATION-ACTIVATING PROTEIN 2"/>
    <property type="match status" value="1"/>
</dbReference>
<dbReference type="PANTHER" id="PTHR10960:SF0">
    <property type="entry name" value="V(D)J RECOMBINATION-ACTIVATING PROTEIN 2"/>
    <property type="match status" value="1"/>
</dbReference>
<dbReference type="Pfam" id="PF03089">
    <property type="entry name" value="RAG2"/>
    <property type="match status" value="1"/>
</dbReference>
<dbReference type="Pfam" id="PF13341">
    <property type="entry name" value="RAG2_PHD"/>
    <property type="match status" value="1"/>
</dbReference>
<dbReference type="SUPFAM" id="SSF57903">
    <property type="entry name" value="FYVE/PHD zinc finger"/>
    <property type="match status" value="1"/>
</dbReference>
<dbReference type="SUPFAM" id="SSF50965">
    <property type="entry name" value="Galactose oxidase, central domain"/>
    <property type="match status" value="1"/>
</dbReference>
<proteinExistence type="evidence at protein level"/>
<comment type="function">
    <text evidence="1">Core component of the RAG complex, a multiprotein complex that mediates the DNA cleavage phase during V(D)J recombination. V(D)J recombination assembles a diverse repertoire of immunoglobulin and T-cell receptor genes in developing B and T-lymphocytes through rearrangement of different V (variable), in some cases D (diversity), and J (joining) gene segments. DNA cleavage by the RAG complex occurs in 2 steps: a first nick is introduced in the top strand immediately upstream of the heptamer, generating a 3'-hydroxyl group that can attack the phosphodiester bond on the opposite strand in a direct transesterification reaction, thereby creating 4 DNA ends: 2 hairpin coding ends and 2 blunt, 5'-phosphorylated ends. The chromatin structure plays an essential role in the V(D)J recombination reactions and the presence of histone H3 trimethylated at 'Lys-4' (H3K4me3) stimulates both the nicking and haipinning steps. The RAG complex also plays a role in pre-B cell allelic exclusion, a process leading to expression of a single immunoglobulin heavy chain allele to enforce clonality and monospecific recognition by the B-cell antigen receptor (BCR) expressed on individual B-lymphocytes. The introduction of DNA breaks by the RAG complex on one immunoglobulin allele induces ATM-dependent repositioning of the other allele to pericentromeric heterochromatin, preventing accessibility to the RAG complex and recombination of the second allele. In the RAG complex, RAG2 is not the catalytic component but is required for all known catalytic activities mediated by RAG1. It probably acts as a sensor of chromatin state that recruits the RAG complex to H3K4me3 (By similarity).</text>
</comment>
<comment type="subunit">
    <text evidence="1">Component of the RAG complex composed of core components RAG1 and RAG2, and associated component HMGB1 or HMGB2.</text>
</comment>
<comment type="subcellular location">
    <subcellularLocation>
        <location evidence="1">Nucleus</location>
    </subcellularLocation>
</comment>
<comment type="tissue specificity">
    <text>Cells of the B- and T-lymphocyte lineages.</text>
</comment>
<comment type="domain">
    <text evidence="1">The atypical PHD-type zinc finger recognizes and binds histone H3 trimethylated on 'Lys-4' (H3K4me3). The presence Tyr-445 instead of a carboxylate in classical PHD-type zinc fingers results in an enhanced binding to H3K4me3 in presence of dimethylated on 'Arg-2' (H3R2me2) rather than inhibited. The atypical PHD-type zinc finger also binds various phosphoinositides, such as phosphatidylinositol 3,4-bisphosphate binding (PtdIns(3,4)P2), phosphatidylinositol 3,5-bisphosphate binding (PtdIns(3,5)P2), phosphatidylinositol 4,5-bisphosphate (PtdIns(4,5)P2) and phosphatidylinositol 3,4,5-trisphosphate binding (PtdIns(3,4,5)P3) (By similarity).</text>
</comment>
<comment type="disease" evidence="3">
    <disease id="DI-01360">
        <name>Combined cellular and humoral immune defects with granulomas</name>
        <acronym>CHIDG</acronym>
        <description>Immunodeficiency disease with granulomas in the skin, mucous membranes, and internal organs. Other characteristics include hypogammaglobulinemia, a diminished number of T and B-cells, and sparse thymic tissue on ultrasonography.</description>
        <dbReference type="MIM" id="233650"/>
    </disease>
    <text>The disease is caused by variants affecting the gene represented in this entry.</text>
</comment>
<comment type="disease" evidence="4">
    <disease id="DI-01019">
        <name>Severe combined immunodeficiency autosomal recessive T-cell-negative/B-cell-negative/NK-cell-positive</name>
        <acronym>T(-)B(-)NK(+) SCID</acronym>
        <description>A form of severe combined immunodeficiency (SCID), a genetically and clinically heterogeneous group of rare congenital disorders characterized by impairment of both humoral and cell-mediated immunity, leukopenia, and low or absent antibody levels. Patients present in infancy recurrent, persistent infections by opportunistic organisms. The common characteristic of all types of SCID is absence of T-cell-mediated cellular immunity due to a defect in T-cell development.</description>
        <dbReference type="MIM" id="601457"/>
    </disease>
    <text>The disease is caused by variants affecting the gene represented in this entry.</text>
</comment>
<comment type="disease" evidence="5">
    <disease id="DI-02093">
        <name>Omenn syndrome</name>
        <acronym>OS</acronym>
        <description>Severe immunodeficiency characterized by the presence of activated, anergic, oligoclonal T-cells, hypereosinophilia, and high IgE levels.</description>
        <dbReference type="MIM" id="603554"/>
    </disease>
    <text>The disease is caused by variants affecting the gene represented in this entry.</text>
</comment>
<comment type="similarity">
    <text evidence="6">Belongs to the RAG2 family.</text>
</comment>
<comment type="online information" name="RAG2base">
    <link uri="https://databases.lovd.nl/shared/genes/RAG2"/>
    <text>RAG2 deficiency database</text>
</comment>
<name>RAG2_HUMAN</name>
<accession>P55895</accession>
<accession>A8K9E9</accession>
<accession>Q8TBL4</accession>
<gene>
    <name type="primary">RAG2</name>
</gene>
<protein>
    <recommendedName>
        <fullName>V(D)J recombination-activating protein 2</fullName>
        <shortName>RAG-2</shortName>
    </recommendedName>
</protein>
<feature type="chain" id="PRO_0000167137" description="V(D)J recombination-activating protein 2">
    <location>
        <begin position="1"/>
        <end position="527"/>
    </location>
</feature>
<feature type="zinc finger region" description="PHD-type; atypical">
    <location>
        <begin position="416"/>
        <end position="484"/>
    </location>
</feature>
<feature type="region of interest" description="Disordered" evidence="2">
    <location>
        <begin position="357"/>
        <end position="380"/>
    </location>
</feature>
<feature type="compositionally biased region" description="Polar residues" evidence="2">
    <location>
        <begin position="358"/>
        <end position="370"/>
    </location>
</feature>
<feature type="compositionally biased region" description="Acidic residues" evidence="2">
    <location>
        <begin position="371"/>
        <end position="380"/>
    </location>
</feature>
<feature type="binding site" evidence="1">
    <location>
        <position position="419"/>
    </location>
    <ligand>
        <name>Zn(2+)</name>
        <dbReference type="ChEBI" id="CHEBI:29105"/>
        <label>1</label>
    </ligand>
</feature>
<feature type="binding site" evidence="1">
    <location>
        <position position="423"/>
    </location>
    <ligand>
        <name>Zn(2+)</name>
        <dbReference type="ChEBI" id="CHEBI:29105"/>
        <label>1</label>
    </ligand>
</feature>
<feature type="binding site" evidence="1">
    <location>
        <position position="446"/>
    </location>
    <ligand>
        <name>Zn(2+)</name>
        <dbReference type="ChEBI" id="CHEBI:29105"/>
        <label>2</label>
    </ligand>
</feature>
<feature type="binding site" evidence="1">
    <location>
        <position position="452"/>
    </location>
    <ligand>
        <name>Zn(2+)</name>
        <dbReference type="ChEBI" id="CHEBI:29105"/>
        <label>2</label>
    </ligand>
</feature>
<feature type="binding site" evidence="1">
    <location>
        <position position="455"/>
    </location>
    <ligand>
        <name>Zn(2+)</name>
        <dbReference type="ChEBI" id="CHEBI:29105"/>
        <label>1</label>
    </ligand>
</feature>
<feature type="binding site" evidence="1">
    <location>
        <position position="458"/>
    </location>
    <ligand>
        <name>Zn(2+)</name>
        <dbReference type="ChEBI" id="CHEBI:29105"/>
        <label>1</label>
    </ligand>
</feature>
<feature type="binding site" evidence="1">
    <location>
        <position position="478"/>
    </location>
    <ligand>
        <name>Zn(2+)</name>
        <dbReference type="ChEBI" id="CHEBI:29105"/>
        <label>2</label>
    </ligand>
</feature>
<feature type="binding site" evidence="1">
    <location>
        <position position="481"/>
    </location>
    <ligand>
        <name>Zn(2+)</name>
        <dbReference type="ChEBI" id="CHEBI:29105"/>
        <label>2</label>
    </ligand>
</feature>
<feature type="sequence variant" id="VAR_008895" description="In OS; dbSNP:rs121917895." evidence="5">
    <original>C</original>
    <variation>W</variation>
    <location>
        <position position="41"/>
    </location>
</feature>
<feature type="sequence variant" id="VAR_045960" description="In CHIDG; reduced recombination activity; dbSNP:rs121918574." evidence="3">
    <original>T</original>
    <variation>N</variation>
    <location>
        <position position="77"/>
    </location>
</feature>
<feature type="sequence variant" id="VAR_005570" description="In T(-)B(-)NK(+) SCID; dbSNP:rs121917894." evidence="4">
    <original>R</original>
    <variation>Q</variation>
    <location>
        <position position="229"/>
    </location>
</feature>
<feature type="sequence variant" id="VAR_008896" description="In OS; dbSNP:rs121917896." evidence="5">
    <original>M</original>
    <variation>R</variation>
    <location>
        <position position="285"/>
    </location>
</feature>
<feature type="sequence variant" id="VAR_045961" description="In dbSNP:rs16929093.">
    <original>E</original>
    <variation>G</variation>
    <location>
        <position position="293"/>
    </location>
</feature>
<feature type="sequence variant" id="VAR_045962" description="In CHIDG; reduced recombination activity; dbSNP:rs121918575." evidence="3">
    <original>G</original>
    <variation>A</variation>
    <location>
        <position position="451"/>
    </location>
</feature>
<feature type="sequence variant" id="VAR_005571" description="In T(-)B(-)NK(+) SCID; dbSNP:rs121918573." evidence="4">
    <original>C</original>
    <variation>Y</variation>
    <location>
        <position position="478"/>
    </location>
</feature>
<feature type="sequence conflict" description="In Ref. 4; AAH22397." evidence="6" ref="4">
    <original>V</original>
    <variation>A</variation>
    <location>
        <position position="154"/>
    </location>
</feature>
<feature type="sequence conflict" description="In Ref. 4; AAH22397." evidence="6" ref="4">
    <original>M</original>
    <variation>T</variation>
    <location>
        <position position="322"/>
    </location>
</feature>
<sequence>MSLQMVTVSNNIALIQPGFSLMNFDGQVFFFGQKGWPKRSCPTGVFHLDVKHNHVKLKPTIFSKDSCYLPPLRYPATCTFKGSLESEKHQYIIHGGKTPNNEVSDKIYVMSIVCKNNKKVTFRCTEKDLVGDVPEARYGHSINVVYSRGKSMGVLFGGRSYMPSTHRTTEKWNSVADCLPCVFLVDFEFGCATSYILPELQDGLSFHVSIAKNDTIYILGGHSLANNIRPANLYRIRVDLPLGSPAVNCTVLPGGISVSSAILTQTNNDEFVIVGGYQLENQKRMICNIISLEDNKIEIREMETPDWTPDIKHSKIWFGSNMGNGTVFLGIPGDNKQVVSEGFYFYMLKCAEDDTNEEQTTFTNSQTSTEDPGDSTPFEDSEEFCFSAEANSFDGDDEFDTYNEDDEEDESETGYWITCCPTCDVDINTWVPFYSTELNKPAMIYCSHGDGHWVHAQCMDLAERTLIHLSAGSNKYYCNEHVEIARALHTPQRVLPLKKPPMKSLRKKGSGKILTPAKKSFLRRLFD</sequence>
<evidence type="ECO:0000250" key="1"/>
<evidence type="ECO:0000256" key="2">
    <source>
        <dbReference type="SAM" id="MobiDB-lite"/>
    </source>
</evidence>
<evidence type="ECO:0000269" key="3">
    <source>
    </source>
</evidence>
<evidence type="ECO:0000269" key="4">
    <source>
    </source>
</evidence>
<evidence type="ECO:0000269" key="5">
    <source>
    </source>
</evidence>
<evidence type="ECO:0000305" key="6"/>
<reference key="1">
    <citation type="journal article" date="1992" name="Immunol. Lett.">
        <title>Sequence and chromosome assignment to 11p13-p12 of human RAG genes.</title>
        <authorList>
            <person name="Ichihara Y."/>
            <person name="Hirai M."/>
            <person name="Kurosawa Y."/>
        </authorList>
    </citation>
    <scope>NUCLEOTIDE SEQUENCE [GENOMIC DNA]</scope>
    <source>
        <tissue>Placenta</tissue>
    </source>
</reference>
<reference key="2">
    <citation type="journal article" date="2004" name="Nat. Genet.">
        <title>Complete sequencing and characterization of 21,243 full-length human cDNAs.</title>
        <authorList>
            <person name="Ota T."/>
            <person name="Suzuki Y."/>
            <person name="Nishikawa T."/>
            <person name="Otsuki T."/>
            <person name="Sugiyama T."/>
            <person name="Irie R."/>
            <person name="Wakamatsu A."/>
            <person name="Hayashi K."/>
            <person name="Sato H."/>
            <person name="Nagai K."/>
            <person name="Kimura K."/>
            <person name="Makita H."/>
            <person name="Sekine M."/>
            <person name="Obayashi M."/>
            <person name="Nishi T."/>
            <person name="Shibahara T."/>
            <person name="Tanaka T."/>
            <person name="Ishii S."/>
            <person name="Yamamoto J."/>
            <person name="Saito K."/>
            <person name="Kawai Y."/>
            <person name="Isono Y."/>
            <person name="Nakamura Y."/>
            <person name="Nagahari K."/>
            <person name="Murakami K."/>
            <person name="Yasuda T."/>
            <person name="Iwayanagi T."/>
            <person name="Wagatsuma M."/>
            <person name="Shiratori A."/>
            <person name="Sudo H."/>
            <person name="Hosoiri T."/>
            <person name="Kaku Y."/>
            <person name="Kodaira H."/>
            <person name="Kondo H."/>
            <person name="Sugawara M."/>
            <person name="Takahashi M."/>
            <person name="Kanda K."/>
            <person name="Yokoi T."/>
            <person name="Furuya T."/>
            <person name="Kikkawa E."/>
            <person name="Omura Y."/>
            <person name="Abe K."/>
            <person name="Kamihara K."/>
            <person name="Katsuta N."/>
            <person name="Sato K."/>
            <person name="Tanikawa M."/>
            <person name="Yamazaki M."/>
            <person name="Ninomiya K."/>
            <person name="Ishibashi T."/>
            <person name="Yamashita H."/>
            <person name="Murakawa K."/>
            <person name="Fujimori K."/>
            <person name="Tanai H."/>
            <person name="Kimata M."/>
            <person name="Watanabe M."/>
            <person name="Hiraoka S."/>
            <person name="Chiba Y."/>
            <person name="Ishida S."/>
            <person name="Ono Y."/>
            <person name="Takiguchi S."/>
            <person name="Watanabe S."/>
            <person name="Yosida M."/>
            <person name="Hotuta T."/>
            <person name="Kusano J."/>
            <person name="Kanehori K."/>
            <person name="Takahashi-Fujii A."/>
            <person name="Hara H."/>
            <person name="Tanase T.-O."/>
            <person name="Nomura Y."/>
            <person name="Togiya S."/>
            <person name="Komai F."/>
            <person name="Hara R."/>
            <person name="Takeuchi K."/>
            <person name="Arita M."/>
            <person name="Imose N."/>
            <person name="Musashino K."/>
            <person name="Yuuki H."/>
            <person name="Oshima A."/>
            <person name="Sasaki N."/>
            <person name="Aotsuka S."/>
            <person name="Yoshikawa Y."/>
            <person name="Matsunawa H."/>
            <person name="Ichihara T."/>
            <person name="Shiohata N."/>
            <person name="Sano S."/>
            <person name="Moriya S."/>
            <person name="Momiyama H."/>
            <person name="Satoh N."/>
            <person name="Takami S."/>
            <person name="Terashima Y."/>
            <person name="Suzuki O."/>
            <person name="Nakagawa S."/>
            <person name="Senoh A."/>
            <person name="Mizoguchi H."/>
            <person name="Goto Y."/>
            <person name="Shimizu F."/>
            <person name="Wakebe H."/>
            <person name="Hishigaki H."/>
            <person name="Watanabe T."/>
            <person name="Sugiyama A."/>
            <person name="Takemoto M."/>
            <person name="Kawakami B."/>
            <person name="Yamazaki M."/>
            <person name="Watanabe K."/>
            <person name="Kumagai A."/>
            <person name="Itakura S."/>
            <person name="Fukuzumi Y."/>
            <person name="Fujimori Y."/>
            <person name="Komiyama M."/>
            <person name="Tashiro H."/>
            <person name="Tanigami A."/>
            <person name="Fujiwara T."/>
            <person name="Ono T."/>
            <person name="Yamada K."/>
            <person name="Fujii Y."/>
            <person name="Ozaki K."/>
            <person name="Hirao M."/>
            <person name="Ohmori Y."/>
            <person name="Kawabata A."/>
            <person name="Hikiji T."/>
            <person name="Kobatake N."/>
            <person name="Inagaki H."/>
            <person name="Ikema Y."/>
            <person name="Okamoto S."/>
            <person name="Okitani R."/>
            <person name="Kawakami T."/>
            <person name="Noguchi S."/>
            <person name="Itoh T."/>
            <person name="Shigeta K."/>
            <person name="Senba T."/>
            <person name="Matsumura K."/>
            <person name="Nakajima Y."/>
            <person name="Mizuno T."/>
            <person name="Morinaga M."/>
            <person name="Sasaki M."/>
            <person name="Togashi T."/>
            <person name="Oyama M."/>
            <person name="Hata H."/>
            <person name="Watanabe M."/>
            <person name="Komatsu T."/>
            <person name="Mizushima-Sugano J."/>
            <person name="Satoh T."/>
            <person name="Shirai Y."/>
            <person name="Takahashi Y."/>
            <person name="Nakagawa K."/>
            <person name="Okumura K."/>
            <person name="Nagase T."/>
            <person name="Nomura N."/>
            <person name="Kikuchi H."/>
            <person name="Masuho Y."/>
            <person name="Yamashita R."/>
            <person name="Nakai K."/>
            <person name="Yada T."/>
            <person name="Nakamura Y."/>
            <person name="Ohara O."/>
            <person name="Isogai T."/>
            <person name="Sugano S."/>
        </authorList>
    </citation>
    <scope>NUCLEOTIDE SEQUENCE [LARGE SCALE MRNA]</scope>
    <source>
        <tissue>Thymus</tissue>
    </source>
</reference>
<reference key="3">
    <citation type="submission" date="2005-09" db="EMBL/GenBank/DDBJ databases">
        <authorList>
            <person name="Mural R.J."/>
            <person name="Istrail S."/>
            <person name="Sutton G.G."/>
            <person name="Florea L."/>
            <person name="Halpern A.L."/>
            <person name="Mobarry C.M."/>
            <person name="Lippert R."/>
            <person name="Walenz B."/>
            <person name="Shatkay H."/>
            <person name="Dew I."/>
            <person name="Miller J.R."/>
            <person name="Flanigan M.J."/>
            <person name="Edwards N.J."/>
            <person name="Bolanos R."/>
            <person name="Fasulo D."/>
            <person name="Halldorsson B.V."/>
            <person name="Hannenhalli S."/>
            <person name="Turner R."/>
            <person name="Yooseph S."/>
            <person name="Lu F."/>
            <person name="Nusskern D.R."/>
            <person name="Shue B.C."/>
            <person name="Zheng X.H."/>
            <person name="Zhong F."/>
            <person name="Delcher A.L."/>
            <person name="Huson D.H."/>
            <person name="Kravitz S.A."/>
            <person name="Mouchard L."/>
            <person name="Reinert K."/>
            <person name="Remington K.A."/>
            <person name="Clark A.G."/>
            <person name="Waterman M.S."/>
            <person name="Eichler E.E."/>
            <person name="Adams M.D."/>
            <person name="Hunkapiller M.W."/>
            <person name="Myers E.W."/>
            <person name="Venter J.C."/>
        </authorList>
    </citation>
    <scope>NUCLEOTIDE SEQUENCE [LARGE SCALE GENOMIC DNA]</scope>
</reference>
<reference key="4">
    <citation type="journal article" date="2004" name="Genome Res.">
        <title>The status, quality, and expansion of the NIH full-length cDNA project: the Mammalian Gene Collection (MGC).</title>
        <authorList>
            <consortium name="The MGC Project Team"/>
        </authorList>
    </citation>
    <scope>NUCLEOTIDE SEQUENCE [LARGE SCALE MRNA]</scope>
    <source>
        <tissue>Testis</tissue>
    </source>
</reference>
<reference key="5">
    <citation type="journal article" date="1991" name="Blood">
        <title>Expression of human recombination activating genes (RAG1 and RAG2) in neoplastic lymphoid cells: correlation with cell differentiation and antigen receptor expression.</title>
        <authorList>
            <person name="Bories J.C."/>
            <person name="Cayuela J.-M."/>
            <person name="Loiseau P."/>
            <person name="Sigaux F."/>
        </authorList>
    </citation>
    <scope>NUCLEOTIDE SEQUENCE [MRNA] OF 318-411</scope>
</reference>
<reference key="6">
    <citation type="journal article" date="1996" name="Science">
        <title>RAG mutations in human B cell-negative SCID.</title>
        <authorList>
            <person name="Schwarz K."/>
            <person name="Gauss G.H."/>
            <person name="Ludwig L."/>
            <person name="Pannicke U."/>
            <person name="Li Z."/>
            <person name="Linder D."/>
            <person name="Friedrich W."/>
            <person name="Seger R.A."/>
            <person name="Hansen-Hagge T.E."/>
            <person name="Desiderio S."/>
            <person name="Lieber M.R."/>
            <person name="Bartram C.R."/>
        </authorList>
    </citation>
    <scope>VARIANTS T(-)B(-)NK(+) SCID GLN-229 AND TYR-478</scope>
</reference>
<reference key="7">
    <citation type="journal article" date="1998" name="Cell">
        <title>Partial V(D)J recombination activity leads to Omenn syndrome.</title>
        <authorList>
            <person name="Villa A."/>
            <person name="Santagata S."/>
            <person name="Bozzi F."/>
            <person name="Giliani S."/>
            <person name="Frattini A."/>
            <person name="Imberti L."/>
            <person name="Gatta L.B."/>
            <person name="Ochs H.D."/>
            <person name="Schwarz K."/>
            <person name="Notarangelo L.D."/>
            <person name="Vezzoni P."/>
            <person name="Spanopoulou E."/>
        </authorList>
    </citation>
    <scope>VARIANTS OS TRP-41 AND ARG-285</scope>
</reference>
<reference key="8">
    <citation type="journal article" date="2008" name="N. Engl. J. Med.">
        <title>An immunodeficiency disease with RAG mutations and granulomas.</title>
        <authorList>
            <person name="Schuetz C."/>
            <person name="Huck K."/>
            <person name="Gudowius S."/>
            <person name="Megahed M."/>
            <person name="Feyen O."/>
            <person name="Hubner B."/>
            <person name="Schneider D.T."/>
            <person name="Manfras B."/>
            <person name="Pannicke U."/>
            <person name="Willemze R."/>
            <person name="Knuechel R."/>
            <person name="Goebel U."/>
            <person name="Schulz A."/>
            <person name="Borkhardt A."/>
            <person name="Friedrich W."/>
            <person name="Schwarz K."/>
            <person name="Niehues T."/>
        </authorList>
    </citation>
    <scope>VARIANTS CHIDG ASN-77 AND ALA-451</scope>
    <scope>CHARACTERIZATION OF VARIANTS CHIDG ASN-77 AND ALA-451</scope>
</reference>
<keyword id="KW-0002">3D-structure</keyword>
<keyword id="KW-0156">Chromatin regulator</keyword>
<keyword id="KW-0225">Disease variant</keyword>
<keyword id="KW-0233">DNA recombination</keyword>
<keyword id="KW-0479">Metal-binding</keyword>
<keyword id="KW-0539">Nucleus</keyword>
<keyword id="KW-1185">Reference proteome</keyword>
<keyword id="KW-0705">SCID</keyword>
<keyword id="KW-0862">Zinc</keyword>
<keyword id="KW-0863">Zinc-finger</keyword>